<accession>A6VI37</accession>
<feature type="chain" id="PRO_1000040449" description="6,7-dimethyl-8-ribityllumazine synthase">
    <location>
        <begin position="1"/>
        <end position="137"/>
    </location>
</feature>
<feature type="active site" description="Proton donor" evidence="1">
    <location>
        <position position="75"/>
    </location>
</feature>
<feature type="binding site" evidence="1">
    <location>
        <position position="11"/>
    </location>
    <ligand>
        <name>5-amino-6-(D-ribitylamino)uracil</name>
        <dbReference type="ChEBI" id="CHEBI:15934"/>
    </ligand>
</feature>
<feature type="binding site" evidence="1">
    <location>
        <begin position="43"/>
        <end position="45"/>
    </location>
    <ligand>
        <name>5-amino-6-(D-ribitylamino)uracil</name>
        <dbReference type="ChEBI" id="CHEBI:15934"/>
    </ligand>
</feature>
<feature type="binding site" evidence="1">
    <location>
        <begin position="67"/>
        <end position="69"/>
    </location>
    <ligand>
        <name>5-amino-6-(D-ribitylamino)uracil</name>
        <dbReference type="ChEBI" id="CHEBI:15934"/>
    </ligand>
</feature>
<feature type="binding site" evidence="1">
    <location>
        <begin position="72"/>
        <end position="73"/>
    </location>
    <ligand>
        <name>(2S)-2-hydroxy-3-oxobutyl phosphate</name>
        <dbReference type="ChEBI" id="CHEBI:58830"/>
    </ligand>
</feature>
<feature type="binding site" evidence="1">
    <location>
        <position position="100"/>
    </location>
    <ligand>
        <name>5-amino-6-(D-ribitylamino)uracil</name>
        <dbReference type="ChEBI" id="CHEBI:15934"/>
    </ligand>
</feature>
<feature type="binding site" evidence="1">
    <location>
        <position position="115"/>
    </location>
    <ligand>
        <name>(2S)-2-hydroxy-3-oxobutyl phosphate</name>
        <dbReference type="ChEBI" id="CHEBI:58830"/>
    </ligand>
</feature>
<name>RISB_METM7</name>
<sequence>MVKLGFVIAEFNRDLTFMMEKLAEEHAAFLGADVSCKIMVPGSFDMPLAIKTLLQKDDIDAVVTIGCVIEGDTEHDEIVVQNAARKIADLSLEFGKPVALGIAGPGMTRMQAEDRIDYGKSAVEAAVKMVKRLKEIQ</sequence>
<proteinExistence type="inferred from homology"/>
<comment type="function">
    <text evidence="1">Catalyzes the formation of 6,7-dimethyl-8-ribityllumazine by condensation of 5-amino-6-(D-ribitylamino)uracil with 3,4-dihydroxy-2-butanone 4-phosphate. This is the penultimate step in the biosynthesis of riboflavin.</text>
</comment>
<comment type="catalytic activity">
    <reaction evidence="1">
        <text>(2S)-2-hydroxy-3-oxobutyl phosphate + 5-amino-6-(D-ribitylamino)uracil = 6,7-dimethyl-8-(1-D-ribityl)lumazine + phosphate + 2 H2O + H(+)</text>
        <dbReference type="Rhea" id="RHEA:26152"/>
        <dbReference type="ChEBI" id="CHEBI:15377"/>
        <dbReference type="ChEBI" id="CHEBI:15378"/>
        <dbReference type="ChEBI" id="CHEBI:15934"/>
        <dbReference type="ChEBI" id="CHEBI:43474"/>
        <dbReference type="ChEBI" id="CHEBI:58201"/>
        <dbReference type="ChEBI" id="CHEBI:58830"/>
        <dbReference type="EC" id="2.5.1.78"/>
    </reaction>
</comment>
<comment type="pathway">
    <text evidence="1">Cofactor biosynthesis; riboflavin biosynthesis; riboflavin from 2-hydroxy-3-oxobutyl phosphate and 5-amino-6-(D-ribitylamino)uracil: step 1/2.</text>
</comment>
<comment type="subunit">
    <text evidence="1">Forms an icosahedral capsid composed of 60 subunits, arranged as a dodecamer of pentamers.</text>
</comment>
<comment type="similarity">
    <text evidence="1">Belongs to the DMRL synthase family.</text>
</comment>
<dbReference type="EC" id="2.5.1.78" evidence="1"/>
<dbReference type="EMBL" id="CP000745">
    <property type="protein sequence ID" value="ABR66113.1"/>
    <property type="molecule type" value="Genomic_DNA"/>
</dbReference>
<dbReference type="SMR" id="A6VI37"/>
<dbReference type="STRING" id="426368.MmarC7_1047"/>
<dbReference type="KEGG" id="mmz:MmarC7_1047"/>
<dbReference type="eggNOG" id="arCOG01323">
    <property type="taxonomic scope" value="Archaea"/>
</dbReference>
<dbReference type="HOGENOM" id="CLU_089358_3_1_2"/>
<dbReference type="OrthoDB" id="7610at2157"/>
<dbReference type="UniPathway" id="UPA00275">
    <property type="reaction ID" value="UER00404"/>
</dbReference>
<dbReference type="GO" id="GO:0009349">
    <property type="term" value="C:riboflavin synthase complex"/>
    <property type="evidence" value="ECO:0007669"/>
    <property type="project" value="InterPro"/>
</dbReference>
<dbReference type="GO" id="GO:0000906">
    <property type="term" value="F:6,7-dimethyl-8-ribityllumazine synthase activity"/>
    <property type="evidence" value="ECO:0007669"/>
    <property type="project" value="UniProtKB-UniRule"/>
</dbReference>
<dbReference type="GO" id="GO:0009231">
    <property type="term" value="P:riboflavin biosynthetic process"/>
    <property type="evidence" value="ECO:0007669"/>
    <property type="project" value="UniProtKB-UniRule"/>
</dbReference>
<dbReference type="CDD" id="cd09211">
    <property type="entry name" value="Lumazine_synthase_archaeal"/>
    <property type="match status" value="1"/>
</dbReference>
<dbReference type="FunFam" id="3.40.50.960:FF:000003">
    <property type="entry name" value="6,7-dimethyl-8-ribityllumazine synthase"/>
    <property type="match status" value="1"/>
</dbReference>
<dbReference type="Gene3D" id="3.40.50.960">
    <property type="entry name" value="Lumazine/riboflavin synthase"/>
    <property type="match status" value="1"/>
</dbReference>
<dbReference type="HAMAP" id="MF_00178">
    <property type="entry name" value="Lumazine_synth"/>
    <property type="match status" value="1"/>
</dbReference>
<dbReference type="InterPro" id="IPR034964">
    <property type="entry name" value="LS"/>
</dbReference>
<dbReference type="InterPro" id="IPR002180">
    <property type="entry name" value="LS/RS"/>
</dbReference>
<dbReference type="InterPro" id="IPR036467">
    <property type="entry name" value="LS/RS_sf"/>
</dbReference>
<dbReference type="NCBIfam" id="TIGR00114">
    <property type="entry name" value="lumazine-synth"/>
    <property type="match status" value="1"/>
</dbReference>
<dbReference type="PANTHER" id="PTHR21058:SF0">
    <property type="entry name" value="6,7-DIMETHYL-8-RIBITYLLUMAZINE SYNTHASE"/>
    <property type="match status" value="1"/>
</dbReference>
<dbReference type="PANTHER" id="PTHR21058">
    <property type="entry name" value="6,7-DIMETHYL-8-RIBITYLLUMAZINE SYNTHASE DMRL SYNTHASE LUMAZINE SYNTHASE"/>
    <property type="match status" value="1"/>
</dbReference>
<dbReference type="Pfam" id="PF00885">
    <property type="entry name" value="DMRL_synthase"/>
    <property type="match status" value="1"/>
</dbReference>
<dbReference type="SUPFAM" id="SSF52121">
    <property type="entry name" value="Lumazine synthase"/>
    <property type="match status" value="1"/>
</dbReference>
<reference key="1">
    <citation type="submission" date="2007-06" db="EMBL/GenBank/DDBJ databases">
        <title>Complete sequence of Methanococcus maripaludis C7.</title>
        <authorList>
            <consortium name="US DOE Joint Genome Institute"/>
            <person name="Copeland A."/>
            <person name="Lucas S."/>
            <person name="Lapidus A."/>
            <person name="Barry K."/>
            <person name="Glavina del Rio T."/>
            <person name="Dalin E."/>
            <person name="Tice H."/>
            <person name="Pitluck S."/>
            <person name="Clum A."/>
            <person name="Schmutz J."/>
            <person name="Larimer F."/>
            <person name="Land M."/>
            <person name="Hauser L."/>
            <person name="Kyrpides N."/>
            <person name="Anderson I."/>
            <person name="Sieprawska-Lupa M."/>
            <person name="Whitman W.B."/>
            <person name="Richardson P."/>
        </authorList>
    </citation>
    <scope>NUCLEOTIDE SEQUENCE [LARGE SCALE GENOMIC DNA]</scope>
    <source>
        <strain>C7 / ATCC BAA-1331</strain>
    </source>
</reference>
<evidence type="ECO:0000255" key="1">
    <source>
        <dbReference type="HAMAP-Rule" id="MF_00178"/>
    </source>
</evidence>
<protein>
    <recommendedName>
        <fullName evidence="1">6,7-dimethyl-8-ribityllumazine synthase</fullName>
        <shortName evidence="1">DMRL synthase</shortName>
        <shortName evidence="1">LS</shortName>
        <shortName evidence="1">Lumazine synthase</shortName>
        <ecNumber evidence="1">2.5.1.78</ecNumber>
    </recommendedName>
</protein>
<keyword id="KW-0686">Riboflavin biosynthesis</keyword>
<keyword id="KW-0808">Transferase</keyword>
<organism>
    <name type="scientific">Methanococcus maripaludis (strain C7 / ATCC BAA-1331)</name>
    <dbReference type="NCBI Taxonomy" id="426368"/>
    <lineage>
        <taxon>Archaea</taxon>
        <taxon>Methanobacteriati</taxon>
        <taxon>Methanobacteriota</taxon>
        <taxon>Methanomada group</taxon>
        <taxon>Methanococci</taxon>
        <taxon>Methanococcales</taxon>
        <taxon>Methanococcaceae</taxon>
        <taxon>Methanococcus</taxon>
    </lineage>
</organism>
<gene>
    <name evidence="1" type="primary">ribH</name>
    <name type="ordered locus">MmarC7_1047</name>
</gene>